<proteinExistence type="inferred from homology"/>
<comment type="function">
    <text evidence="1">Catalyzes the GTP-dependent ribosomal translocation step during translation elongation. During this step, the ribosome changes from the pre-translocational (PRE) to the post-translocational (POST) state as the newly formed A-site-bound peptidyl-tRNA and P-site-bound deacylated tRNA move to the P and E sites, respectively. Catalyzes the coordinated movement of the two tRNA molecules, the mRNA and conformational changes in the ribosome.</text>
</comment>
<comment type="subcellular location">
    <subcellularLocation>
        <location evidence="1">Cytoplasm</location>
    </subcellularLocation>
</comment>
<comment type="similarity">
    <text evidence="1">Belongs to the TRAFAC class translation factor GTPase superfamily. Classic translation factor GTPase family. EF-G/EF-2 subfamily.</text>
</comment>
<protein>
    <recommendedName>
        <fullName evidence="1">Elongation factor G</fullName>
        <shortName evidence="1">EF-G</shortName>
    </recommendedName>
</protein>
<reference key="1">
    <citation type="journal article" date="2004" name="Nucleic Acids Res.">
        <title>The genome sequence of Bacillus cereus ATCC 10987 reveals metabolic adaptations and a large plasmid related to Bacillus anthracis pXO1.</title>
        <authorList>
            <person name="Rasko D.A."/>
            <person name="Ravel J."/>
            <person name="Oekstad O.A."/>
            <person name="Helgason E."/>
            <person name="Cer R.Z."/>
            <person name="Jiang L."/>
            <person name="Shores K.A."/>
            <person name="Fouts D.E."/>
            <person name="Tourasse N.J."/>
            <person name="Angiuoli S.V."/>
            <person name="Kolonay J.F."/>
            <person name="Nelson W.C."/>
            <person name="Kolstoe A.-B."/>
            <person name="Fraser C.M."/>
            <person name="Read T.D."/>
        </authorList>
    </citation>
    <scope>NUCLEOTIDE SEQUENCE [LARGE SCALE GENOMIC DNA]</scope>
    <source>
        <strain>ATCC 10987 / NRS 248</strain>
    </source>
</reference>
<dbReference type="EMBL" id="AE017194">
    <property type="protein sequence ID" value="AAS39043.1"/>
    <property type="molecule type" value="Genomic_DNA"/>
</dbReference>
<dbReference type="SMR" id="Q73F99"/>
<dbReference type="KEGG" id="bca:BCE_0107"/>
<dbReference type="HOGENOM" id="CLU_002794_4_1_9"/>
<dbReference type="Proteomes" id="UP000002527">
    <property type="component" value="Chromosome"/>
</dbReference>
<dbReference type="GO" id="GO:0005737">
    <property type="term" value="C:cytoplasm"/>
    <property type="evidence" value="ECO:0007669"/>
    <property type="project" value="UniProtKB-SubCell"/>
</dbReference>
<dbReference type="GO" id="GO:0005525">
    <property type="term" value="F:GTP binding"/>
    <property type="evidence" value="ECO:0007669"/>
    <property type="project" value="UniProtKB-UniRule"/>
</dbReference>
<dbReference type="GO" id="GO:0003924">
    <property type="term" value="F:GTPase activity"/>
    <property type="evidence" value="ECO:0007669"/>
    <property type="project" value="InterPro"/>
</dbReference>
<dbReference type="GO" id="GO:0003746">
    <property type="term" value="F:translation elongation factor activity"/>
    <property type="evidence" value="ECO:0007669"/>
    <property type="project" value="UniProtKB-UniRule"/>
</dbReference>
<dbReference type="GO" id="GO:0032790">
    <property type="term" value="P:ribosome disassembly"/>
    <property type="evidence" value="ECO:0007669"/>
    <property type="project" value="TreeGrafter"/>
</dbReference>
<dbReference type="CDD" id="cd01886">
    <property type="entry name" value="EF-G"/>
    <property type="match status" value="1"/>
</dbReference>
<dbReference type="CDD" id="cd16262">
    <property type="entry name" value="EFG_III"/>
    <property type="match status" value="1"/>
</dbReference>
<dbReference type="CDD" id="cd01434">
    <property type="entry name" value="EFG_mtEFG1_IV"/>
    <property type="match status" value="1"/>
</dbReference>
<dbReference type="CDD" id="cd03713">
    <property type="entry name" value="EFG_mtEFG_C"/>
    <property type="match status" value="1"/>
</dbReference>
<dbReference type="CDD" id="cd04088">
    <property type="entry name" value="EFG_mtEFG_II"/>
    <property type="match status" value="1"/>
</dbReference>
<dbReference type="FunFam" id="2.40.30.10:FF:000006">
    <property type="entry name" value="Elongation factor G"/>
    <property type="match status" value="1"/>
</dbReference>
<dbReference type="FunFam" id="3.30.230.10:FF:000003">
    <property type="entry name" value="Elongation factor G"/>
    <property type="match status" value="1"/>
</dbReference>
<dbReference type="FunFam" id="3.30.70.240:FF:000001">
    <property type="entry name" value="Elongation factor G"/>
    <property type="match status" value="1"/>
</dbReference>
<dbReference type="FunFam" id="3.30.70.870:FF:000001">
    <property type="entry name" value="Elongation factor G"/>
    <property type="match status" value="1"/>
</dbReference>
<dbReference type="FunFam" id="3.40.50.300:FF:000029">
    <property type="entry name" value="Elongation factor G"/>
    <property type="match status" value="1"/>
</dbReference>
<dbReference type="Gene3D" id="3.30.230.10">
    <property type="match status" value="1"/>
</dbReference>
<dbReference type="Gene3D" id="3.30.70.240">
    <property type="match status" value="1"/>
</dbReference>
<dbReference type="Gene3D" id="3.30.70.870">
    <property type="entry name" value="Elongation Factor G (Translational Gtpase), domain 3"/>
    <property type="match status" value="1"/>
</dbReference>
<dbReference type="Gene3D" id="3.40.50.300">
    <property type="entry name" value="P-loop containing nucleotide triphosphate hydrolases"/>
    <property type="match status" value="1"/>
</dbReference>
<dbReference type="Gene3D" id="2.40.30.10">
    <property type="entry name" value="Translation factors"/>
    <property type="match status" value="1"/>
</dbReference>
<dbReference type="HAMAP" id="MF_00054_B">
    <property type="entry name" value="EF_G_EF_2_B"/>
    <property type="match status" value="1"/>
</dbReference>
<dbReference type="InterPro" id="IPR041095">
    <property type="entry name" value="EFG_II"/>
</dbReference>
<dbReference type="InterPro" id="IPR009022">
    <property type="entry name" value="EFG_III"/>
</dbReference>
<dbReference type="InterPro" id="IPR035647">
    <property type="entry name" value="EFG_III/V"/>
</dbReference>
<dbReference type="InterPro" id="IPR047872">
    <property type="entry name" value="EFG_IV"/>
</dbReference>
<dbReference type="InterPro" id="IPR035649">
    <property type="entry name" value="EFG_V"/>
</dbReference>
<dbReference type="InterPro" id="IPR000640">
    <property type="entry name" value="EFG_V-like"/>
</dbReference>
<dbReference type="InterPro" id="IPR004161">
    <property type="entry name" value="EFTu-like_2"/>
</dbReference>
<dbReference type="InterPro" id="IPR031157">
    <property type="entry name" value="G_TR_CS"/>
</dbReference>
<dbReference type="InterPro" id="IPR027417">
    <property type="entry name" value="P-loop_NTPase"/>
</dbReference>
<dbReference type="InterPro" id="IPR020568">
    <property type="entry name" value="Ribosomal_Su5_D2-typ_SF"/>
</dbReference>
<dbReference type="InterPro" id="IPR014721">
    <property type="entry name" value="Ribsml_uS5_D2-typ_fold_subgr"/>
</dbReference>
<dbReference type="InterPro" id="IPR005225">
    <property type="entry name" value="Small_GTP-bd"/>
</dbReference>
<dbReference type="InterPro" id="IPR000795">
    <property type="entry name" value="T_Tr_GTP-bd_dom"/>
</dbReference>
<dbReference type="InterPro" id="IPR009000">
    <property type="entry name" value="Transl_B-barrel_sf"/>
</dbReference>
<dbReference type="InterPro" id="IPR004540">
    <property type="entry name" value="Transl_elong_EFG/EF2"/>
</dbReference>
<dbReference type="InterPro" id="IPR005517">
    <property type="entry name" value="Transl_elong_EFG/EF2_IV"/>
</dbReference>
<dbReference type="NCBIfam" id="TIGR00484">
    <property type="entry name" value="EF-G"/>
    <property type="match status" value="1"/>
</dbReference>
<dbReference type="NCBIfam" id="NF009379">
    <property type="entry name" value="PRK12740.1-3"/>
    <property type="match status" value="1"/>
</dbReference>
<dbReference type="NCBIfam" id="NF009381">
    <property type="entry name" value="PRK12740.1-5"/>
    <property type="match status" value="1"/>
</dbReference>
<dbReference type="NCBIfam" id="NF009891">
    <property type="entry name" value="PRK13351.1-1"/>
    <property type="match status" value="1"/>
</dbReference>
<dbReference type="NCBIfam" id="TIGR00231">
    <property type="entry name" value="small_GTP"/>
    <property type="match status" value="1"/>
</dbReference>
<dbReference type="PANTHER" id="PTHR43261:SF1">
    <property type="entry name" value="RIBOSOME-RELEASING FACTOR 2, MITOCHONDRIAL"/>
    <property type="match status" value="1"/>
</dbReference>
<dbReference type="PANTHER" id="PTHR43261">
    <property type="entry name" value="TRANSLATION ELONGATION FACTOR G-RELATED"/>
    <property type="match status" value="1"/>
</dbReference>
<dbReference type="Pfam" id="PF00679">
    <property type="entry name" value="EFG_C"/>
    <property type="match status" value="1"/>
</dbReference>
<dbReference type="Pfam" id="PF14492">
    <property type="entry name" value="EFG_III"/>
    <property type="match status" value="1"/>
</dbReference>
<dbReference type="Pfam" id="PF03764">
    <property type="entry name" value="EFG_IV"/>
    <property type="match status" value="1"/>
</dbReference>
<dbReference type="Pfam" id="PF00009">
    <property type="entry name" value="GTP_EFTU"/>
    <property type="match status" value="1"/>
</dbReference>
<dbReference type="Pfam" id="PF03144">
    <property type="entry name" value="GTP_EFTU_D2"/>
    <property type="match status" value="1"/>
</dbReference>
<dbReference type="PRINTS" id="PR00315">
    <property type="entry name" value="ELONGATNFCT"/>
</dbReference>
<dbReference type="SMART" id="SM00838">
    <property type="entry name" value="EFG_C"/>
    <property type="match status" value="1"/>
</dbReference>
<dbReference type="SMART" id="SM00889">
    <property type="entry name" value="EFG_IV"/>
    <property type="match status" value="1"/>
</dbReference>
<dbReference type="SUPFAM" id="SSF54980">
    <property type="entry name" value="EF-G C-terminal domain-like"/>
    <property type="match status" value="2"/>
</dbReference>
<dbReference type="SUPFAM" id="SSF52540">
    <property type="entry name" value="P-loop containing nucleoside triphosphate hydrolases"/>
    <property type="match status" value="1"/>
</dbReference>
<dbReference type="SUPFAM" id="SSF54211">
    <property type="entry name" value="Ribosomal protein S5 domain 2-like"/>
    <property type="match status" value="1"/>
</dbReference>
<dbReference type="SUPFAM" id="SSF50447">
    <property type="entry name" value="Translation proteins"/>
    <property type="match status" value="1"/>
</dbReference>
<dbReference type="PROSITE" id="PS00301">
    <property type="entry name" value="G_TR_1"/>
    <property type="match status" value="1"/>
</dbReference>
<dbReference type="PROSITE" id="PS51722">
    <property type="entry name" value="G_TR_2"/>
    <property type="match status" value="1"/>
</dbReference>
<evidence type="ECO:0000255" key="1">
    <source>
        <dbReference type="HAMAP-Rule" id="MF_00054"/>
    </source>
</evidence>
<gene>
    <name evidence="1" type="primary">fusA</name>
    <name type="ordered locus">BCE_0107</name>
</gene>
<feature type="chain" id="PRO_0000091062" description="Elongation factor G">
    <location>
        <begin position="1"/>
        <end position="692"/>
    </location>
</feature>
<feature type="domain" description="tr-type G">
    <location>
        <begin position="8"/>
        <end position="282"/>
    </location>
</feature>
<feature type="binding site" evidence="1">
    <location>
        <begin position="17"/>
        <end position="24"/>
    </location>
    <ligand>
        <name>GTP</name>
        <dbReference type="ChEBI" id="CHEBI:37565"/>
    </ligand>
</feature>
<feature type="binding site" evidence="1">
    <location>
        <begin position="81"/>
        <end position="85"/>
    </location>
    <ligand>
        <name>GTP</name>
        <dbReference type="ChEBI" id="CHEBI:37565"/>
    </ligand>
</feature>
<feature type="binding site" evidence="1">
    <location>
        <begin position="135"/>
        <end position="138"/>
    </location>
    <ligand>
        <name>GTP</name>
        <dbReference type="ChEBI" id="CHEBI:37565"/>
    </ligand>
</feature>
<sequence>MGREFSLENTRNIGIMAHIDAGKTTATERILYYTGRIHKIGETHEGASQMDWMEQEQERGITITSAATTAQWKGHRVNIIDTPGHVDFTVEVERSLRVLDGAVAVLDAQSGVEPQTETVWRQATTYGVPRIVFVNKMDKIGADFLYSVGTIHDRLQANAHPIQLPIGAEDEFNGIIDLVEECAYMYGNDLGTDIQRVEIPEEHKELAEEYRGKLIEAVAELDEEMMMKYLEGEEITVEELKAGIRKATTSVEFFPVICGSAFKNKGVQILLDAVIDYLPSPLDVPAIKGIVPDTDEEVERKSSDEEPFSALAFKIMTDPYVGKLTFFRVYSGVLNSGSYVKNSTKGKRERVGRILQMHANSREEISTVYAGDIAAAVGLKDTTTGDTLCDEKSLVILESMEFPEPVISVAIEPKSKADQDKMGTALAKLSEEDPTFRAHTDQETGQTIIAGMGELHLDIIVDRMRREFKVEANVGAPQVAYRETFRSAAKVEGKFARQSGGRGQFGHVWIEFEPNEEGKGFEFENKIVGGVVPREYIPAVGAGLEDALKNGVLAGYPVVDIKAALVDGSYHDVDSSEMAFKIAASMALKAAVSKCNPVILEPMMKVEVVIPEEYMGDIMGDVTSRRGRVEGMEARGNAQVVRAMVPLSEMFGYATSLRSNTQGRGTFSMVFDHYEEVPKSVSEEIIKKNKGE</sequence>
<accession>Q73F99</accession>
<organism>
    <name type="scientific">Bacillus cereus (strain ATCC 10987 / NRS 248)</name>
    <dbReference type="NCBI Taxonomy" id="222523"/>
    <lineage>
        <taxon>Bacteria</taxon>
        <taxon>Bacillati</taxon>
        <taxon>Bacillota</taxon>
        <taxon>Bacilli</taxon>
        <taxon>Bacillales</taxon>
        <taxon>Bacillaceae</taxon>
        <taxon>Bacillus</taxon>
        <taxon>Bacillus cereus group</taxon>
    </lineage>
</organism>
<keyword id="KW-0963">Cytoplasm</keyword>
<keyword id="KW-0251">Elongation factor</keyword>
<keyword id="KW-0342">GTP-binding</keyword>
<keyword id="KW-0547">Nucleotide-binding</keyword>
<keyword id="KW-0648">Protein biosynthesis</keyword>
<name>EFG_BACC1</name>